<protein>
    <recommendedName>
        <fullName>Prolactin-1</fullName>
    </recommendedName>
    <alternativeName>
        <fullName>Prolactin I</fullName>
        <shortName>PRL-I</shortName>
    </alternativeName>
</protein>
<accession>P69131</accession>
<accession>P09583</accession>
<accession>P15470</accession>
<dbReference type="EMBL" id="M36267">
    <property type="protein sequence ID" value="AAB03564.1"/>
    <property type="molecule type" value="mRNA"/>
</dbReference>
<dbReference type="PIR" id="S00359">
    <property type="entry name" value="S00359"/>
</dbReference>
<dbReference type="SMR" id="P69131"/>
<dbReference type="Proteomes" id="UP000694402">
    <property type="component" value="Unplaced"/>
</dbReference>
<dbReference type="GO" id="GO:0005615">
    <property type="term" value="C:extracellular space"/>
    <property type="evidence" value="ECO:0007669"/>
    <property type="project" value="TreeGrafter"/>
</dbReference>
<dbReference type="GO" id="GO:0005179">
    <property type="term" value="F:hormone activity"/>
    <property type="evidence" value="ECO:0007669"/>
    <property type="project" value="UniProtKB-KW"/>
</dbReference>
<dbReference type="GO" id="GO:0005148">
    <property type="term" value="F:prolactin receptor binding"/>
    <property type="evidence" value="ECO:0000250"/>
    <property type="project" value="AgBase"/>
</dbReference>
<dbReference type="GO" id="GO:0016176">
    <property type="term" value="F:superoxide-generating NADPH oxidase activator activity"/>
    <property type="evidence" value="ECO:0000250"/>
    <property type="project" value="AgBase"/>
</dbReference>
<dbReference type="GO" id="GO:0007259">
    <property type="term" value="P:cell surface receptor signaling pathway via JAK-STAT"/>
    <property type="evidence" value="ECO:0000250"/>
    <property type="project" value="AgBase"/>
</dbReference>
<dbReference type="GO" id="GO:0010629">
    <property type="term" value="P:negative regulation of gene expression"/>
    <property type="evidence" value="ECO:0000250"/>
    <property type="project" value="AgBase"/>
</dbReference>
<dbReference type="GO" id="GO:0010628">
    <property type="term" value="P:positive regulation of gene expression"/>
    <property type="evidence" value="ECO:0000250"/>
    <property type="project" value="AgBase"/>
</dbReference>
<dbReference type="GO" id="GO:0070665">
    <property type="term" value="P:positive regulation of leukocyte proliferation"/>
    <property type="evidence" value="ECO:0000250"/>
    <property type="project" value="AgBase"/>
</dbReference>
<dbReference type="GO" id="GO:0050766">
    <property type="term" value="P:positive regulation of phagocytosis"/>
    <property type="evidence" value="ECO:0000250"/>
    <property type="project" value="AgBase"/>
</dbReference>
<dbReference type="GO" id="GO:1903428">
    <property type="term" value="P:positive regulation of reactive oxygen species biosynthetic process"/>
    <property type="evidence" value="ECO:0000250"/>
    <property type="project" value="AgBase"/>
</dbReference>
<dbReference type="GO" id="GO:0046427">
    <property type="term" value="P:positive regulation of receptor signaling pathway via JAK-STAT"/>
    <property type="evidence" value="ECO:0007669"/>
    <property type="project" value="TreeGrafter"/>
</dbReference>
<dbReference type="GO" id="GO:0060267">
    <property type="term" value="P:positive regulation of respiratory burst"/>
    <property type="evidence" value="ECO:0000250"/>
    <property type="project" value="AgBase"/>
</dbReference>
<dbReference type="GO" id="GO:0032930">
    <property type="term" value="P:positive regulation of superoxide anion generation"/>
    <property type="evidence" value="ECO:0000250"/>
    <property type="project" value="AgBase"/>
</dbReference>
<dbReference type="GO" id="GO:0002637">
    <property type="term" value="P:regulation of immunoglobulin production"/>
    <property type="evidence" value="ECO:0000250"/>
    <property type="project" value="AgBase"/>
</dbReference>
<dbReference type="GO" id="GO:0031667">
    <property type="term" value="P:response to nutrient levels"/>
    <property type="evidence" value="ECO:0007669"/>
    <property type="project" value="TreeGrafter"/>
</dbReference>
<dbReference type="FunFam" id="1.20.1250.10:FF:000037">
    <property type="entry name" value="Prolactin"/>
    <property type="match status" value="1"/>
</dbReference>
<dbReference type="Gene3D" id="1.20.1250.10">
    <property type="match status" value="1"/>
</dbReference>
<dbReference type="InterPro" id="IPR009079">
    <property type="entry name" value="4_helix_cytokine-like_core"/>
</dbReference>
<dbReference type="InterPro" id="IPR001400">
    <property type="entry name" value="Somatotropin/Prolactin"/>
</dbReference>
<dbReference type="InterPro" id="IPR018116">
    <property type="entry name" value="Somatotropin_CS"/>
</dbReference>
<dbReference type="PANTHER" id="PTHR11417:SF5">
    <property type="entry name" value="PROLACTIN"/>
    <property type="match status" value="1"/>
</dbReference>
<dbReference type="PANTHER" id="PTHR11417">
    <property type="entry name" value="SOMATOTROPIN,PROLACTIN"/>
    <property type="match status" value="1"/>
</dbReference>
<dbReference type="Pfam" id="PF00103">
    <property type="entry name" value="Hormone_1"/>
    <property type="match status" value="1"/>
</dbReference>
<dbReference type="PRINTS" id="PR00836">
    <property type="entry name" value="SOMATOTROPIN"/>
</dbReference>
<dbReference type="SUPFAM" id="SSF47266">
    <property type="entry name" value="4-helical cytokines"/>
    <property type="match status" value="1"/>
</dbReference>
<dbReference type="PROSITE" id="PS00266">
    <property type="entry name" value="SOMATOTROPIN_1"/>
    <property type="match status" value="1"/>
</dbReference>
<dbReference type="PROSITE" id="PS00338">
    <property type="entry name" value="SOMATOTROPIN_2"/>
    <property type="match status" value="1"/>
</dbReference>
<feature type="signal peptide" evidence="1">
    <location>
        <begin position="1"/>
        <end position="23"/>
    </location>
</feature>
<feature type="chain" id="PRO_0000032942" description="Prolactin-1">
    <location>
        <begin position="24"/>
        <end position="211"/>
    </location>
</feature>
<feature type="disulfide bond" evidence="1">
    <location>
        <begin position="69"/>
        <end position="184"/>
    </location>
</feature>
<feature type="disulfide bond" evidence="1">
    <location>
        <begin position="201"/>
        <end position="211"/>
    </location>
</feature>
<comment type="subcellular location">
    <subcellularLocation>
        <location>Secreted</location>
    </subcellularLocation>
</comment>
<comment type="similarity">
    <text evidence="2">Belongs to the somatotropin/prolactin family.</text>
</comment>
<reference key="1">
    <citation type="journal article" date="1988" name="Eur. J. Biochem.">
        <title>Molecular cloning and expression of salmon prolactin cDNA.</title>
        <authorList>
            <person name="Song S."/>
            <person name="Trinh K.-Y."/>
            <person name="Hew C.-L."/>
            <person name="Hwang S.J."/>
            <person name="Belkhode S."/>
            <person name="Idler D.R."/>
        </authorList>
    </citation>
    <scope>NUCLEOTIDE SEQUENCE [MRNA]</scope>
</reference>
<name>PRL1_ONCTS</name>
<proteinExistence type="evidence at transcript level"/>
<keyword id="KW-1015">Disulfide bond</keyword>
<keyword id="KW-0372">Hormone</keyword>
<keyword id="KW-1185">Reference proteome</keyword>
<keyword id="KW-0964">Secreted</keyword>
<keyword id="KW-0732">Signal</keyword>
<organism>
    <name type="scientific">Oncorhynchus tshawytscha</name>
    <name type="common">Chinook salmon</name>
    <name type="synonym">Salmo tshawytscha</name>
    <dbReference type="NCBI Taxonomy" id="74940"/>
    <lineage>
        <taxon>Eukaryota</taxon>
        <taxon>Metazoa</taxon>
        <taxon>Chordata</taxon>
        <taxon>Craniata</taxon>
        <taxon>Vertebrata</taxon>
        <taxon>Euteleostomi</taxon>
        <taxon>Actinopterygii</taxon>
        <taxon>Neopterygii</taxon>
        <taxon>Teleostei</taxon>
        <taxon>Protacanthopterygii</taxon>
        <taxon>Salmoniformes</taxon>
        <taxon>Salmonidae</taxon>
        <taxon>Salmoninae</taxon>
        <taxon>Oncorhynchus</taxon>
    </lineage>
</organism>
<evidence type="ECO:0000250" key="1"/>
<evidence type="ECO:0000305" key="2"/>
<sequence length="211" mass="23559">MARRSQGTKLHLAVLCLVVSCHAIGLSDLMERASQRSDKLHSLSTSLTKDLDSHFPPMGRVMMPRPSMCHTSSLQTPKDKEQALKVSENELISLARYLLLAWNDPLLLLSSEAPTLPHTPSNGDISSKIRELQDYSKSLGDGLDIMVNKMGPSSQYISSIPFKGGDLGNDKTSRLINFHFLMSCFRRDSHKIDSFLKVLRCRATNMRPETC</sequence>
<gene>
    <name type="primary">prl1</name>
</gene>